<keyword id="KW-0031">Aminopeptidase</keyword>
<keyword id="KW-0963">Cytoplasm</keyword>
<keyword id="KW-0378">Hydrolase</keyword>
<keyword id="KW-0464">Manganese</keyword>
<keyword id="KW-0479">Metal-binding</keyword>
<keyword id="KW-0645">Protease</keyword>
<feature type="chain" id="PRO_1000019903" description="Probable cytosol aminopeptidase">
    <location>
        <begin position="1"/>
        <end position="500"/>
    </location>
</feature>
<feature type="active site" evidence="1">
    <location>
        <position position="276"/>
    </location>
</feature>
<feature type="active site" evidence="1">
    <location>
        <position position="350"/>
    </location>
</feature>
<feature type="binding site" evidence="1">
    <location>
        <position position="264"/>
    </location>
    <ligand>
        <name>Mn(2+)</name>
        <dbReference type="ChEBI" id="CHEBI:29035"/>
        <label>2</label>
    </ligand>
</feature>
<feature type="binding site" evidence="1">
    <location>
        <position position="269"/>
    </location>
    <ligand>
        <name>Mn(2+)</name>
        <dbReference type="ChEBI" id="CHEBI:29035"/>
        <label>1</label>
    </ligand>
</feature>
<feature type="binding site" evidence="1">
    <location>
        <position position="269"/>
    </location>
    <ligand>
        <name>Mn(2+)</name>
        <dbReference type="ChEBI" id="CHEBI:29035"/>
        <label>2</label>
    </ligand>
</feature>
<feature type="binding site" evidence="1">
    <location>
        <position position="287"/>
    </location>
    <ligand>
        <name>Mn(2+)</name>
        <dbReference type="ChEBI" id="CHEBI:29035"/>
        <label>2</label>
    </ligand>
</feature>
<feature type="binding site" evidence="1">
    <location>
        <position position="346"/>
    </location>
    <ligand>
        <name>Mn(2+)</name>
        <dbReference type="ChEBI" id="CHEBI:29035"/>
        <label>1</label>
    </ligand>
</feature>
<feature type="binding site" evidence="1">
    <location>
        <position position="348"/>
    </location>
    <ligand>
        <name>Mn(2+)</name>
        <dbReference type="ChEBI" id="CHEBI:29035"/>
        <label>1</label>
    </ligand>
</feature>
<feature type="binding site" evidence="1">
    <location>
        <position position="348"/>
    </location>
    <ligand>
        <name>Mn(2+)</name>
        <dbReference type="ChEBI" id="CHEBI:29035"/>
        <label>2</label>
    </ligand>
</feature>
<evidence type="ECO:0000255" key="1">
    <source>
        <dbReference type="HAMAP-Rule" id="MF_00181"/>
    </source>
</evidence>
<proteinExistence type="inferred from homology"/>
<organism>
    <name type="scientific">Chlamydia abortus (strain DSM 27085 / S26/3)</name>
    <name type="common">Chlamydophila abortus</name>
    <dbReference type="NCBI Taxonomy" id="218497"/>
    <lineage>
        <taxon>Bacteria</taxon>
        <taxon>Pseudomonadati</taxon>
        <taxon>Chlamydiota</taxon>
        <taxon>Chlamydiia</taxon>
        <taxon>Chlamydiales</taxon>
        <taxon>Chlamydiaceae</taxon>
        <taxon>Chlamydia/Chlamydophila group</taxon>
        <taxon>Chlamydia</taxon>
    </lineage>
</organism>
<comment type="function">
    <text evidence="1">Presumably involved in the processing and regular turnover of intracellular proteins. Catalyzes the removal of unsubstituted N-terminal amino acids from various peptides.</text>
</comment>
<comment type="catalytic activity">
    <reaction evidence="1">
        <text>Release of an N-terminal amino acid, Xaa-|-Yaa-, in which Xaa is preferably Leu, but may be other amino acids including Pro although not Arg or Lys, and Yaa may be Pro. Amino acid amides and methyl esters are also readily hydrolyzed, but rates on arylamides are exceedingly low.</text>
        <dbReference type="EC" id="3.4.11.1"/>
    </reaction>
</comment>
<comment type="catalytic activity">
    <reaction evidence="1">
        <text>Release of an N-terminal amino acid, preferentially leucine, but not glutamic or aspartic acids.</text>
        <dbReference type="EC" id="3.4.11.10"/>
    </reaction>
</comment>
<comment type="cofactor">
    <cofactor evidence="1">
        <name>Mn(2+)</name>
        <dbReference type="ChEBI" id="CHEBI:29035"/>
    </cofactor>
    <text evidence="1">Binds 2 manganese ions per subunit.</text>
</comment>
<comment type="subcellular location">
    <subcellularLocation>
        <location evidence="1">Cytoplasm</location>
    </subcellularLocation>
</comment>
<comment type="similarity">
    <text evidence="1">Belongs to the peptidase M17 family.</text>
</comment>
<accession>Q5L681</accession>
<dbReference type="EC" id="3.4.11.1" evidence="1"/>
<dbReference type="EC" id="3.4.11.10" evidence="1"/>
<dbReference type="EMBL" id="CR848038">
    <property type="protein sequence ID" value="CAH63850.1"/>
    <property type="molecule type" value="Genomic_DNA"/>
</dbReference>
<dbReference type="RefSeq" id="WP_011097039.1">
    <property type="nucleotide sequence ID" value="NC_004552.2"/>
</dbReference>
<dbReference type="SMR" id="Q5L681"/>
<dbReference type="KEGG" id="cab:CAB397"/>
<dbReference type="eggNOG" id="COG0260">
    <property type="taxonomic scope" value="Bacteria"/>
</dbReference>
<dbReference type="HOGENOM" id="CLU_013734_2_2_0"/>
<dbReference type="OrthoDB" id="9809354at2"/>
<dbReference type="Proteomes" id="UP000001012">
    <property type="component" value="Chromosome"/>
</dbReference>
<dbReference type="GO" id="GO:0005737">
    <property type="term" value="C:cytoplasm"/>
    <property type="evidence" value="ECO:0007669"/>
    <property type="project" value="UniProtKB-SubCell"/>
</dbReference>
<dbReference type="GO" id="GO:0030145">
    <property type="term" value="F:manganese ion binding"/>
    <property type="evidence" value="ECO:0007669"/>
    <property type="project" value="UniProtKB-UniRule"/>
</dbReference>
<dbReference type="GO" id="GO:0070006">
    <property type="term" value="F:metalloaminopeptidase activity"/>
    <property type="evidence" value="ECO:0007669"/>
    <property type="project" value="InterPro"/>
</dbReference>
<dbReference type="GO" id="GO:0006508">
    <property type="term" value="P:proteolysis"/>
    <property type="evidence" value="ECO:0007669"/>
    <property type="project" value="UniProtKB-KW"/>
</dbReference>
<dbReference type="CDD" id="cd00433">
    <property type="entry name" value="Peptidase_M17"/>
    <property type="match status" value="1"/>
</dbReference>
<dbReference type="Gene3D" id="3.40.220.10">
    <property type="entry name" value="Leucine Aminopeptidase, subunit E, domain 1"/>
    <property type="match status" value="1"/>
</dbReference>
<dbReference type="Gene3D" id="3.40.630.10">
    <property type="entry name" value="Zn peptidases"/>
    <property type="match status" value="1"/>
</dbReference>
<dbReference type="HAMAP" id="MF_00181">
    <property type="entry name" value="Cytosol_peptidase_M17"/>
    <property type="match status" value="1"/>
</dbReference>
<dbReference type="InterPro" id="IPR011356">
    <property type="entry name" value="Leucine_aapep/pepB"/>
</dbReference>
<dbReference type="InterPro" id="IPR043472">
    <property type="entry name" value="Macro_dom-like"/>
</dbReference>
<dbReference type="InterPro" id="IPR000819">
    <property type="entry name" value="Peptidase_M17_C"/>
</dbReference>
<dbReference type="InterPro" id="IPR023042">
    <property type="entry name" value="Peptidase_M17_leu_NH2_pept"/>
</dbReference>
<dbReference type="InterPro" id="IPR008283">
    <property type="entry name" value="Peptidase_M17_N"/>
</dbReference>
<dbReference type="NCBIfam" id="NF002074">
    <property type="entry name" value="PRK00913.1-4"/>
    <property type="match status" value="1"/>
</dbReference>
<dbReference type="NCBIfam" id="NF002078">
    <property type="entry name" value="PRK00913.2-5"/>
    <property type="match status" value="1"/>
</dbReference>
<dbReference type="NCBIfam" id="NF002083">
    <property type="entry name" value="PRK00913.3-5"/>
    <property type="match status" value="1"/>
</dbReference>
<dbReference type="PANTHER" id="PTHR11963:SF23">
    <property type="entry name" value="CYTOSOL AMINOPEPTIDASE"/>
    <property type="match status" value="1"/>
</dbReference>
<dbReference type="PANTHER" id="PTHR11963">
    <property type="entry name" value="LEUCINE AMINOPEPTIDASE-RELATED"/>
    <property type="match status" value="1"/>
</dbReference>
<dbReference type="Pfam" id="PF00883">
    <property type="entry name" value="Peptidase_M17"/>
    <property type="match status" value="1"/>
</dbReference>
<dbReference type="Pfam" id="PF02789">
    <property type="entry name" value="Peptidase_M17_N"/>
    <property type="match status" value="1"/>
</dbReference>
<dbReference type="PRINTS" id="PR00481">
    <property type="entry name" value="LAMNOPPTDASE"/>
</dbReference>
<dbReference type="SUPFAM" id="SSF52949">
    <property type="entry name" value="Macro domain-like"/>
    <property type="match status" value="1"/>
</dbReference>
<dbReference type="SUPFAM" id="SSF53187">
    <property type="entry name" value="Zn-dependent exopeptidases"/>
    <property type="match status" value="1"/>
</dbReference>
<dbReference type="PROSITE" id="PS00631">
    <property type="entry name" value="CYTOSOL_AP"/>
    <property type="match status" value="1"/>
</dbReference>
<gene>
    <name evidence="1" type="primary">pepA</name>
    <name type="ordered locus">CAB397</name>
</gene>
<sequence>MVLFHSQASCSKRVKADAIVLPFWKVKSKPKCAASIAKEYESLYRVALDSFSGERGEVEFIYNSGQGKEKRLLILGLGKNEELTSQDVLEVYAKVTRTLRKAKCTTVNVVLPTISELRIPVEDFLTNLTSGILSLNYNYPKYTKEAKKTDPLLTKVTVLGIVPKIADRIFRKEESIFEGVYLTRDLVNGNADEVTPEKLANIAKGLAKQFPSVDAKVLNKDAILKEKMGLLAAVAKGSAVDPRFIVLSYQGKPKSKDHTVLIGKGVTFDSGGLDLKPGKAMLTMKEDMAGAATVLGILSGVAALELPVNVTALIPATENAIDAASYKMGDVYVGMSGLSVEIGSTDAEGRLILADAITYALKYCKPTRIIDFATLTGAMVVSLGEDVAGFFSNNDVLAQDLFEASAETSESLWRLPLVEKYDKALHSDIADMKNIGSNRAGAITAALFLKRFLEDQPVAWAHLDIAGTAYREKDEDAYPKYASGFGVRCLIYYIEKFLSK</sequence>
<reference key="1">
    <citation type="journal article" date="2005" name="Genome Res.">
        <title>The Chlamydophila abortus genome sequence reveals an array of variable proteins that contribute to interspecies variation.</title>
        <authorList>
            <person name="Thomson N.R."/>
            <person name="Yeats C."/>
            <person name="Bell K."/>
            <person name="Holden M.T.G."/>
            <person name="Bentley S.D."/>
            <person name="Livingstone M."/>
            <person name="Cerdeno-Tarraga A.-M."/>
            <person name="Harris B."/>
            <person name="Doggett J."/>
            <person name="Ormond D."/>
            <person name="Mungall K."/>
            <person name="Clarke K."/>
            <person name="Feltwell T."/>
            <person name="Hance Z."/>
            <person name="Sanders M."/>
            <person name="Quail M.A."/>
            <person name="Price C."/>
            <person name="Barrell B.G."/>
            <person name="Parkhill J."/>
            <person name="Longbottom D."/>
        </authorList>
    </citation>
    <scope>NUCLEOTIDE SEQUENCE [LARGE SCALE GENOMIC DNA]</scope>
    <source>
        <strain>DSM 27085 / S26/3</strain>
    </source>
</reference>
<name>AMPA_CHLAB</name>
<protein>
    <recommendedName>
        <fullName evidence="1">Probable cytosol aminopeptidase</fullName>
        <ecNumber evidence="1">3.4.11.1</ecNumber>
    </recommendedName>
    <alternativeName>
        <fullName evidence="1">Leucine aminopeptidase</fullName>
        <shortName evidence="1">LAP</shortName>
        <ecNumber evidence="1">3.4.11.10</ecNumber>
    </alternativeName>
    <alternativeName>
        <fullName evidence="1">Leucyl aminopeptidase</fullName>
    </alternativeName>
</protein>